<evidence type="ECO:0000255" key="1">
    <source>
        <dbReference type="HAMAP-Rule" id="MF_01547"/>
    </source>
</evidence>
<keyword id="KW-0963">Cytoplasm</keyword>
<keyword id="KW-0489">Methyltransferase</keyword>
<keyword id="KW-0698">rRNA processing</keyword>
<keyword id="KW-0949">S-adenosyl-L-methionine</keyword>
<keyword id="KW-0808">Transferase</keyword>
<protein>
    <recommendedName>
        <fullName evidence="1">Ribosomal RNA large subunit methyltransferase E</fullName>
        <ecNumber evidence="1">2.1.1.166</ecNumber>
    </recommendedName>
    <alternativeName>
        <fullName evidence="1">23S rRNA Um2552 methyltransferase</fullName>
    </alternativeName>
    <alternativeName>
        <fullName evidence="1">rRNA (uridine-2'-O-)-methyltransferase</fullName>
    </alternativeName>
</protein>
<name>RLME_COXB1</name>
<gene>
    <name evidence="1" type="primary">rlmE</name>
    <name evidence="1" type="synonym">ftsJ</name>
    <name evidence="1" type="synonym">rrmJ</name>
    <name type="ordered locus">CbuK_1215</name>
</gene>
<proteinExistence type="inferred from homology"/>
<dbReference type="EC" id="2.1.1.166" evidence="1"/>
<dbReference type="EMBL" id="CP001020">
    <property type="protein sequence ID" value="ACJ20401.1"/>
    <property type="molecule type" value="Genomic_DNA"/>
</dbReference>
<dbReference type="RefSeq" id="WP_005770996.1">
    <property type="nucleotide sequence ID" value="NC_011528.1"/>
</dbReference>
<dbReference type="SMR" id="B6J802"/>
<dbReference type="KEGG" id="cbc:CbuK_1215"/>
<dbReference type="HOGENOM" id="CLU_009422_4_0_6"/>
<dbReference type="GO" id="GO:0005737">
    <property type="term" value="C:cytoplasm"/>
    <property type="evidence" value="ECO:0007669"/>
    <property type="project" value="UniProtKB-SubCell"/>
</dbReference>
<dbReference type="GO" id="GO:0008650">
    <property type="term" value="F:rRNA (uridine-2'-O-)-methyltransferase activity"/>
    <property type="evidence" value="ECO:0007669"/>
    <property type="project" value="UniProtKB-UniRule"/>
</dbReference>
<dbReference type="FunFam" id="3.40.50.150:FF:000005">
    <property type="entry name" value="Ribosomal RNA large subunit methyltransferase E"/>
    <property type="match status" value="1"/>
</dbReference>
<dbReference type="Gene3D" id="3.40.50.150">
    <property type="entry name" value="Vaccinia Virus protein VP39"/>
    <property type="match status" value="1"/>
</dbReference>
<dbReference type="HAMAP" id="MF_01547">
    <property type="entry name" value="RNA_methyltr_E"/>
    <property type="match status" value="1"/>
</dbReference>
<dbReference type="InterPro" id="IPR050082">
    <property type="entry name" value="RNA_methyltr_RlmE"/>
</dbReference>
<dbReference type="InterPro" id="IPR002877">
    <property type="entry name" value="RNA_MeTrfase_FtsJ_dom"/>
</dbReference>
<dbReference type="InterPro" id="IPR015507">
    <property type="entry name" value="rRNA-MeTfrase_E"/>
</dbReference>
<dbReference type="InterPro" id="IPR029063">
    <property type="entry name" value="SAM-dependent_MTases_sf"/>
</dbReference>
<dbReference type="PANTHER" id="PTHR10920">
    <property type="entry name" value="RIBOSOMAL RNA METHYLTRANSFERASE"/>
    <property type="match status" value="1"/>
</dbReference>
<dbReference type="PANTHER" id="PTHR10920:SF18">
    <property type="entry name" value="RRNA METHYLTRANSFERASE 2, MITOCHONDRIAL"/>
    <property type="match status" value="1"/>
</dbReference>
<dbReference type="Pfam" id="PF01728">
    <property type="entry name" value="FtsJ"/>
    <property type="match status" value="1"/>
</dbReference>
<dbReference type="PIRSF" id="PIRSF005461">
    <property type="entry name" value="23S_rRNA_mtase"/>
    <property type="match status" value="1"/>
</dbReference>
<dbReference type="SUPFAM" id="SSF53335">
    <property type="entry name" value="S-adenosyl-L-methionine-dependent methyltransferases"/>
    <property type="match status" value="1"/>
</dbReference>
<accession>B6J802</accession>
<organism>
    <name type="scientific">Coxiella burnetii (strain CbuK_Q154)</name>
    <name type="common">Coxiella burnetii (strain Q154)</name>
    <dbReference type="NCBI Taxonomy" id="434924"/>
    <lineage>
        <taxon>Bacteria</taxon>
        <taxon>Pseudomonadati</taxon>
        <taxon>Pseudomonadota</taxon>
        <taxon>Gammaproteobacteria</taxon>
        <taxon>Legionellales</taxon>
        <taxon>Coxiellaceae</taxon>
        <taxon>Coxiella</taxon>
    </lineage>
</organism>
<feature type="chain" id="PRO_1000194986" description="Ribosomal RNA large subunit methyltransferase E">
    <location>
        <begin position="1"/>
        <end position="212"/>
    </location>
</feature>
<feature type="active site" description="Proton acceptor" evidence="1">
    <location>
        <position position="162"/>
    </location>
</feature>
<feature type="binding site" evidence="1">
    <location>
        <position position="57"/>
    </location>
    <ligand>
        <name>S-adenosyl-L-methionine</name>
        <dbReference type="ChEBI" id="CHEBI:59789"/>
    </ligand>
</feature>
<feature type="binding site" evidence="1">
    <location>
        <position position="59"/>
    </location>
    <ligand>
        <name>S-adenosyl-L-methionine</name>
        <dbReference type="ChEBI" id="CHEBI:59789"/>
    </ligand>
</feature>
<feature type="binding site" evidence="1">
    <location>
        <position position="77"/>
    </location>
    <ligand>
        <name>S-adenosyl-L-methionine</name>
        <dbReference type="ChEBI" id="CHEBI:59789"/>
    </ligand>
</feature>
<feature type="binding site" evidence="1">
    <location>
        <position position="93"/>
    </location>
    <ligand>
        <name>S-adenosyl-L-methionine</name>
        <dbReference type="ChEBI" id="CHEBI:59789"/>
    </ligand>
</feature>
<feature type="binding site" evidence="1">
    <location>
        <position position="122"/>
    </location>
    <ligand>
        <name>S-adenosyl-L-methionine</name>
        <dbReference type="ChEBI" id="CHEBI:59789"/>
    </ligand>
</feature>
<reference key="1">
    <citation type="journal article" date="2009" name="Infect. Immun.">
        <title>Comparative genomics reveal extensive transposon-mediated genomic plasticity and diversity among potential effector proteins within the genus Coxiella.</title>
        <authorList>
            <person name="Beare P.A."/>
            <person name="Unsworth N."/>
            <person name="Andoh M."/>
            <person name="Voth D.E."/>
            <person name="Omsland A."/>
            <person name="Gilk S.D."/>
            <person name="Williams K.P."/>
            <person name="Sobral B.W."/>
            <person name="Kupko J.J. III"/>
            <person name="Porcella S.F."/>
            <person name="Samuel J.E."/>
            <person name="Heinzen R.A."/>
        </authorList>
    </citation>
    <scope>NUCLEOTIDE SEQUENCE [LARGE SCALE GENOMIC DNA]</scope>
    <source>
        <strain>CbuK_Q154</strain>
    </source>
</reference>
<sequence length="212" mass="23844">MTHSKRWLEEHEKDPYVKRAKKEGYPSRAAYKLLEIHQKYKLFKPSMNVIDLGAAPGGWSQVAKDLVGPKGVVIAIDLLPIQSMLDVIFIQGDFNEPEIFNQLEAIVAKKTLTGQVDLVISDMAPNISGIKNVDQSRSLHLVELAWDCAQKLLARGGTFLVKVFQGPGVDRFLINLRPYFNQVKFLKPSASRSRSSEIYILAGEFLGYNQRV</sequence>
<comment type="function">
    <text evidence="1">Specifically methylates the uridine in position 2552 of 23S rRNA at the 2'-O position of the ribose in the fully assembled 50S ribosomal subunit.</text>
</comment>
<comment type="catalytic activity">
    <reaction evidence="1">
        <text>uridine(2552) in 23S rRNA + S-adenosyl-L-methionine = 2'-O-methyluridine(2552) in 23S rRNA + S-adenosyl-L-homocysteine + H(+)</text>
        <dbReference type="Rhea" id="RHEA:42720"/>
        <dbReference type="Rhea" id="RHEA-COMP:10202"/>
        <dbReference type="Rhea" id="RHEA-COMP:10203"/>
        <dbReference type="ChEBI" id="CHEBI:15378"/>
        <dbReference type="ChEBI" id="CHEBI:57856"/>
        <dbReference type="ChEBI" id="CHEBI:59789"/>
        <dbReference type="ChEBI" id="CHEBI:65315"/>
        <dbReference type="ChEBI" id="CHEBI:74478"/>
        <dbReference type="EC" id="2.1.1.166"/>
    </reaction>
</comment>
<comment type="subcellular location">
    <subcellularLocation>
        <location evidence="1">Cytoplasm</location>
    </subcellularLocation>
</comment>
<comment type="similarity">
    <text evidence="1">Belongs to the class I-like SAM-binding methyltransferase superfamily. RNA methyltransferase RlmE family.</text>
</comment>